<evidence type="ECO:0000255" key="1">
    <source>
        <dbReference type="HAMAP-Rule" id="MF_01889"/>
    </source>
</evidence>
<evidence type="ECO:0000256" key="2">
    <source>
        <dbReference type="SAM" id="MobiDB-lite"/>
    </source>
</evidence>
<organism>
    <name type="scientific">Shigella sonnei (strain Ss046)</name>
    <dbReference type="NCBI Taxonomy" id="300269"/>
    <lineage>
        <taxon>Bacteria</taxon>
        <taxon>Pseudomonadati</taxon>
        <taxon>Pseudomonadota</taxon>
        <taxon>Gammaproteobacteria</taxon>
        <taxon>Enterobacterales</taxon>
        <taxon>Enterobacteriaceae</taxon>
        <taxon>Shigella</taxon>
    </lineage>
</organism>
<proteinExistence type="inferred from homology"/>
<keyword id="KW-0998">Cell outer membrane</keyword>
<keyword id="KW-0133">Cell shape</keyword>
<keyword id="KW-0449">Lipoprotein</keyword>
<keyword id="KW-0472">Membrane</keyword>
<keyword id="KW-0564">Palmitate</keyword>
<keyword id="KW-0573">Peptidoglycan synthesis</keyword>
<keyword id="KW-1185">Reference proteome</keyword>
<keyword id="KW-0732">Signal</keyword>
<reference key="1">
    <citation type="journal article" date="2005" name="Nucleic Acids Res.">
        <title>Genome dynamics and diversity of Shigella species, the etiologic agents of bacillary dysentery.</title>
        <authorList>
            <person name="Yang F."/>
            <person name="Yang J."/>
            <person name="Zhang X."/>
            <person name="Chen L."/>
            <person name="Jiang Y."/>
            <person name="Yan Y."/>
            <person name="Tang X."/>
            <person name="Wang J."/>
            <person name="Xiong Z."/>
            <person name="Dong J."/>
            <person name="Xue Y."/>
            <person name="Zhu Y."/>
            <person name="Xu X."/>
            <person name="Sun L."/>
            <person name="Chen S."/>
            <person name="Nie H."/>
            <person name="Peng J."/>
            <person name="Xu J."/>
            <person name="Wang Y."/>
            <person name="Yuan Z."/>
            <person name="Wen Y."/>
            <person name="Yao Z."/>
            <person name="Shen Y."/>
            <person name="Qiang B."/>
            <person name="Hou Y."/>
            <person name="Yu J."/>
            <person name="Jin Q."/>
        </authorList>
    </citation>
    <scope>NUCLEOTIDE SEQUENCE [LARGE SCALE GENOMIC DNA]</scope>
    <source>
        <strain>Ss046</strain>
    </source>
</reference>
<name>LPOB_SHISS</name>
<protein>
    <recommendedName>
        <fullName evidence="1">Penicillin-binding protein activator LpoB</fullName>
        <shortName evidence="1">PBP activator LpoB</shortName>
    </recommendedName>
</protein>
<sequence length="213" mass="22516">MTKMSRYALITALAMFLAGCVGQREPAPVEEVKPAPEQPAEPQQPVPTVPSVPTIPQQPGPIEHEDQTAPPAPHIRHYDWNGAMQPMVSKMLGADGVTAGSVLLVDSVNNRTNGSLNAAEATETLRNALANNGKFTLVSAQQLSMAKQQLGLSPQDSLGTRSKAIGIARNVGAHYVLYSSASGNVNAPTLQMQLMLVQTGEIIWSGKGAVSQQ</sequence>
<dbReference type="EMBL" id="CP000038">
    <property type="protein sequence ID" value="AAZ87850.1"/>
    <property type="molecule type" value="Genomic_DNA"/>
</dbReference>
<dbReference type="RefSeq" id="WP_000164439.1">
    <property type="nucleotide sequence ID" value="NC_007384.1"/>
</dbReference>
<dbReference type="BMRB" id="Q3Z312"/>
<dbReference type="SMR" id="Q3Z312"/>
<dbReference type="GeneID" id="93776303"/>
<dbReference type="KEGG" id="ssn:SSON_1125"/>
<dbReference type="HOGENOM" id="CLU_092328_0_0_6"/>
<dbReference type="Proteomes" id="UP000002529">
    <property type="component" value="Chromosome"/>
</dbReference>
<dbReference type="GO" id="GO:0031241">
    <property type="term" value="C:periplasmic side of cell outer membrane"/>
    <property type="evidence" value="ECO:0007669"/>
    <property type="project" value="UniProtKB-UniRule"/>
</dbReference>
<dbReference type="GO" id="GO:0030234">
    <property type="term" value="F:enzyme regulator activity"/>
    <property type="evidence" value="ECO:0007669"/>
    <property type="project" value="UniProtKB-UniRule"/>
</dbReference>
<dbReference type="GO" id="GO:0009252">
    <property type="term" value="P:peptidoglycan biosynthetic process"/>
    <property type="evidence" value="ECO:0007669"/>
    <property type="project" value="UniProtKB-UniRule"/>
</dbReference>
<dbReference type="GO" id="GO:0008360">
    <property type="term" value="P:regulation of cell shape"/>
    <property type="evidence" value="ECO:0007669"/>
    <property type="project" value="UniProtKB-KW"/>
</dbReference>
<dbReference type="FunFam" id="3.40.50.10610:FF:000002">
    <property type="entry name" value="Penicillin-binding protein activator LpoB"/>
    <property type="match status" value="1"/>
</dbReference>
<dbReference type="Gene3D" id="3.40.50.10610">
    <property type="entry name" value="ABC-type transport auxiliary lipoprotein component"/>
    <property type="match status" value="1"/>
</dbReference>
<dbReference type="HAMAP" id="MF_01889">
    <property type="entry name" value="LpoB"/>
    <property type="match status" value="1"/>
</dbReference>
<dbReference type="InterPro" id="IPR014094">
    <property type="entry name" value="LpoB"/>
</dbReference>
<dbReference type="NCBIfam" id="TIGR02722">
    <property type="entry name" value="lp"/>
    <property type="match status" value="1"/>
</dbReference>
<dbReference type="PANTHER" id="PTHR40593">
    <property type="entry name" value="PENICILLIN-BINDING PROTEIN ACTIVATOR LPOB"/>
    <property type="match status" value="1"/>
</dbReference>
<dbReference type="PANTHER" id="PTHR40593:SF1">
    <property type="entry name" value="PENICILLIN-BINDING PROTEIN ACTIVATOR LPOB"/>
    <property type="match status" value="1"/>
</dbReference>
<dbReference type="Pfam" id="PF13036">
    <property type="entry name" value="LpoB"/>
    <property type="match status" value="1"/>
</dbReference>
<dbReference type="PROSITE" id="PS51257">
    <property type="entry name" value="PROKAR_LIPOPROTEIN"/>
    <property type="match status" value="1"/>
</dbReference>
<accession>Q3Z312</accession>
<comment type="function">
    <text evidence="1">Regulator of peptidoglycan synthesis that is essential for the function of penicillin-binding protein 1B (PBP1b).</text>
</comment>
<comment type="subunit">
    <text evidence="1">Interacts with PBP1b.</text>
</comment>
<comment type="subcellular location">
    <subcellularLocation>
        <location evidence="1">Cell outer membrane</location>
        <topology evidence="1">Lipid-anchor</topology>
        <orientation evidence="1">Periplasmic side</orientation>
    </subcellularLocation>
</comment>
<comment type="similarity">
    <text evidence="1">Belongs to the LpoB family.</text>
</comment>
<feature type="signal peptide" evidence="1">
    <location>
        <begin position="1"/>
        <end position="19"/>
    </location>
</feature>
<feature type="chain" id="PRO_0000405791" description="Penicillin-binding protein activator LpoB">
    <location>
        <begin position="20"/>
        <end position="213"/>
    </location>
</feature>
<feature type="region of interest" description="Disordered" evidence="2">
    <location>
        <begin position="28"/>
        <end position="74"/>
    </location>
</feature>
<feature type="compositionally biased region" description="Pro residues" evidence="2">
    <location>
        <begin position="36"/>
        <end position="50"/>
    </location>
</feature>
<feature type="lipid moiety-binding region" description="N-palmitoyl cysteine" evidence="1">
    <location>
        <position position="20"/>
    </location>
</feature>
<feature type="lipid moiety-binding region" description="S-diacylglycerol cysteine" evidence="1">
    <location>
        <position position="20"/>
    </location>
</feature>
<gene>
    <name evidence="1" type="primary">lpoB</name>
    <name type="ordered locus">SSON_1125</name>
</gene>